<name>LY6D_MOUSE</name>
<accession>P35459</accession>
<protein>
    <recommendedName>
        <fullName>Lymphocyte antigen 6D</fullName>
        <shortName>Ly-6D</shortName>
    </recommendedName>
    <alternativeName>
        <fullName>Thymocyte B-cell antigen</fullName>
        <shortName>ThB</shortName>
    </alternativeName>
</protein>
<gene>
    <name type="primary">Ly6d</name>
    <name type="synonym">Ly61</name>
    <name type="synonym">Thb</name>
</gene>
<dbReference type="EMBL" id="X63782">
    <property type="protein sequence ID" value="CAA45317.1"/>
    <property type="molecule type" value="mRNA"/>
</dbReference>
<dbReference type="EMBL" id="L40419">
    <property type="protein sequence ID" value="AAA79249.1"/>
    <property type="status" value="ALT_INIT"/>
    <property type="molecule type" value="Genomic_DNA"/>
</dbReference>
<dbReference type="EMBL" id="BC025135">
    <property type="protein sequence ID" value="AAH25135.1"/>
    <property type="molecule type" value="mRNA"/>
</dbReference>
<dbReference type="CCDS" id="CCDS27531.1"/>
<dbReference type="PIR" id="A46528">
    <property type="entry name" value="A46528"/>
</dbReference>
<dbReference type="PIR" id="I54553">
    <property type="entry name" value="I54553"/>
</dbReference>
<dbReference type="RefSeq" id="NP_034872.1">
    <property type="nucleotide sequence ID" value="NM_010742.1"/>
</dbReference>
<dbReference type="SMR" id="P35459"/>
<dbReference type="FunCoup" id="P35459">
    <property type="interactions" value="22"/>
</dbReference>
<dbReference type="STRING" id="10090.ENSMUSP00000047419"/>
<dbReference type="iPTMnet" id="P35459"/>
<dbReference type="PhosphoSitePlus" id="P35459"/>
<dbReference type="PaxDb" id="10090-ENSMUSP00000047419"/>
<dbReference type="PeptideAtlas" id="P35459"/>
<dbReference type="ProteomicsDB" id="291972"/>
<dbReference type="Antibodypedia" id="14540">
    <property type="antibodies" value="82 antibodies from 18 providers"/>
</dbReference>
<dbReference type="DNASU" id="17068"/>
<dbReference type="Ensembl" id="ENSMUST00000040404.8">
    <property type="protein sequence ID" value="ENSMUSP00000047419.7"/>
    <property type="gene ID" value="ENSMUSG00000034634.8"/>
</dbReference>
<dbReference type="GeneID" id="17068"/>
<dbReference type="KEGG" id="mmu:17068"/>
<dbReference type="UCSC" id="uc007wfx.1">
    <property type="organism name" value="mouse"/>
</dbReference>
<dbReference type="AGR" id="MGI:96881"/>
<dbReference type="CTD" id="8581"/>
<dbReference type="MGI" id="MGI:96881">
    <property type="gene designation" value="Ly6d"/>
</dbReference>
<dbReference type="VEuPathDB" id="HostDB:ENSMUSG00000034634"/>
<dbReference type="eggNOG" id="ENOG502SGKP">
    <property type="taxonomic scope" value="Eukaryota"/>
</dbReference>
<dbReference type="GeneTree" id="ENSGT00730000111514"/>
<dbReference type="HOGENOM" id="CLU_161471_0_0_1"/>
<dbReference type="InParanoid" id="P35459"/>
<dbReference type="OMA" id="LVKKDCA"/>
<dbReference type="OrthoDB" id="9449056at2759"/>
<dbReference type="PhylomeDB" id="P35459"/>
<dbReference type="TreeFam" id="TF336080"/>
<dbReference type="Reactome" id="R-MMU-163125">
    <property type="pathway name" value="Post-translational modification: synthesis of GPI-anchored proteins"/>
</dbReference>
<dbReference type="BioGRID-ORCS" id="17068">
    <property type="hits" value="1 hit in 78 CRISPR screens"/>
</dbReference>
<dbReference type="ChiTaRS" id="Ly6d">
    <property type="organism name" value="mouse"/>
</dbReference>
<dbReference type="PRO" id="PR:P35459"/>
<dbReference type="Proteomes" id="UP000000589">
    <property type="component" value="Chromosome 15"/>
</dbReference>
<dbReference type="RNAct" id="P35459">
    <property type="molecule type" value="protein"/>
</dbReference>
<dbReference type="Bgee" id="ENSMUSG00000034634">
    <property type="expression patterns" value="Expressed in tail skin and 95 other cell types or tissues"/>
</dbReference>
<dbReference type="GO" id="GO:0009986">
    <property type="term" value="C:cell surface"/>
    <property type="evidence" value="ECO:0000314"/>
    <property type="project" value="UniProtKB"/>
</dbReference>
<dbReference type="GO" id="GO:0005886">
    <property type="term" value="C:plasma membrane"/>
    <property type="evidence" value="ECO:0007669"/>
    <property type="project" value="UniProtKB-SubCell"/>
</dbReference>
<dbReference type="GO" id="GO:0098552">
    <property type="term" value="C:side of membrane"/>
    <property type="evidence" value="ECO:0007669"/>
    <property type="project" value="UniProtKB-KW"/>
</dbReference>
<dbReference type="GO" id="GO:0030098">
    <property type="term" value="P:lymphocyte differentiation"/>
    <property type="evidence" value="ECO:0000270"/>
    <property type="project" value="UniProtKB"/>
</dbReference>
<dbReference type="GO" id="GO:0035634">
    <property type="term" value="P:response to stilbenoid"/>
    <property type="evidence" value="ECO:0000270"/>
    <property type="project" value="UniProtKB"/>
</dbReference>
<dbReference type="CDD" id="cd23542">
    <property type="entry name" value="TFP_LU_ECD_Ly6D"/>
    <property type="match status" value="1"/>
</dbReference>
<dbReference type="FunFam" id="2.10.60.10:FF:000003">
    <property type="entry name" value="lymphocyte antigen 6E isoform X1"/>
    <property type="match status" value="1"/>
</dbReference>
<dbReference type="Gene3D" id="2.10.60.10">
    <property type="entry name" value="CD59"/>
    <property type="match status" value="1"/>
</dbReference>
<dbReference type="InterPro" id="IPR018363">
    <property type="entry name" value="CD59_antigen_CS"/>
</dbReference>
<dbReference type="InterPro" id="IPR016054">
    <property type="entry name" value="LY6_UPA_recep-like"/>
</dbReference>
<dbReference type="InterPro" id="IPR042339">
    <property type="entry name" value="Ly6D"/>
</dbReference>
<dbReference type="InterPro" id="IPR045860">
    <property type="entry name" value="Snake_toxin-like_sf"/>
</dbReference>
<dbReference type="InterPro" id="IPR035076">
    <property type="entry name" value="Toxin/TOLIP"/>
</dbReference>
<dbReference type="PANTHER" id="PTHR16982">
    <property type="entry name" value="LYMPHOCYTE ANTIGEN 6D"/>
    <property type="match status" value="1"/>
</dbReference>
<dbReference type="PANTHER" id="PTHR16982:SF2">
    <property type="entry name" value="LYMPHOCYTE ANTIGEN 6D"/>
    <property type="match status" value="1"/>
</dbReference>
<dbReference type="Pfam" id="PF00087">
    <property type="entry name" value="Toxin_TOLIP"/>
    <property type="match status" value="1"/>
</dbReference>
<dbReference type="SMART" id="SM00134">
    <property type="entry name" value="LU"/>
    <property type="match status" value="1"/>
</dbReference>
<dbReference type="SUPFAM" id="SSF57302">
    <property type="entry name" value="Snake toxin-like"/>
    <property type="match status" value="1"/>
</dbReference>
<dbReference type="PROSITE" id="PS00983">
    <property type="entry name" value="LY6_UPAR"/>
    <property type="match status" value="1"/>
</dbReference>
<sequence length="127" mass="13396">MKTALLVLLVLAVATSPAWALRCHVCTNSANCKNPQVCPSNFYFCKTVTSVEPLNGNLVRKECANSCTSDYSQQGHVSSGSEVTQCCQTDLCNERLVSAAPGHALLSSVTLGLATSLSLLTVMALCL</sequence>
<organism>
    <name type="scientific">Mus musculus</name>
    <name type="common">Mouse</name>
    <dbReference type="NCBI Taxonomy" id="10090"/>
    <lineage>
        <taxon>Eukaryota</taxon>
        <taxon>Metazoa</taxon>
        <taxon>Chordata</taxon>
        <taxon>Craniata</taxon>
        <taxon>Vertebrata</taxon>
        <taxon>Euteleostomi</taxon>
        <taxon>Mammalia</taxon>
        <taxon>Eutheria</taxon>
        <taxon>Euarchontoglires</taxon>
        <taxon>Glires</taxon>
        <taxon>Rodentia</taxon>
        <taxon>Myomorpha</taxon>
        <taxon>Muroidea</taxon>
        <taxon>Muridae</taxon>
        <taxon>Murinae</taxon>
        <taxon>Mus</taxon>
        <taxon>Mus</taxon>
    </lineage>
</organism>
<feature type="signal peptide" evidence="2">
    <location>
        <begin position="1"/>
        <end position="20"/>
    </location>
</feature>
<feature type="chain" id="PRO_0000036136" description="Lymphocyte antigen 6D">
    <location>
        <begin position="21"/>
        <end position="98"/>
    </location>
</feature>
<feature type="propeptide" id="PRO_0000036137" description="Removed in mature form" evidence="2">
    <location>
        <begin position="99"/>
        <end position="127"/>
    </location>
</feature>
<feature type="domain" description="UPAR/Ly6">
    <location>
        <begin position="21"/>
        <end position="108"/>
    </location>
</feature>
<feature type="lipid moiety-binding region" description="GPI-anchor amidated serine" evidence="2">
    <location>
        <position position="98"/>
    </location>
</feature>
<feature type="disulfide bond" evidence="1">
    <location>
        <begin position="23"/>
        <end position="45"/>
    </location>
</feature>
<feature type="disulfide bond" evidence="1">
    <location>
        <begin position="26"/>
        <end position="32"/>
    </location>
</feature>
<feature type="disulfide bond" evidence="1">
    <location>
        <begin position="38"/>
        <end position="63"/>
    </location>
</feature>
<feature type="disulfide bond" evidence="1">
    <location>
        <begin position="67"/>
        <end position="86"/>
    </location>
</feature>
<feature type="disulfide bond" evidence="1">
    <location>
        <begin position="87"/>
        <end position="92"/>
    </location>
</feature>
<proteinExistence type="evidence at protein level"/>
<evidence type="ECO:0000250" key="1"/>
<evidence type="ECO:0000255" key="2"/>
<evidence type="ECO:0000269" key="3">
    <source>
    </source>
</evidence>
<evidence type="ECO:0000305" key="4"/>
<reference key="1">
    <citation type="journal article" date="1992" name="J. Immunol.">
        <title>Isolation and characterization of cDNA clones for the mouse thymocyte B cell antigen (ThB).</title>
        <authorList>
            <person name="Gumley T.P."/>
            <person name="McKenzie I.F."/>
            <person name="Kozak C.A."/>
            <person name="Sandrin M.S."/>
        </authorList>
    </citation>
    <scope>NUCLEOTIDE SEQUENCE [MRNA]</scope>
    <source>
        <strain>C57BL/6J</strain>
        <tissue>Thymocyte</tissue>
    </source>
</reference>
<reference key="2">
    <citation type="journal article" date="1995" name="Immunogenetics">
        <title>Sequence and structure of the mouse ThB gene.</title>
        <authorList>
            <person name="Gumley T.P."/>
            <person name="McKenzie I.F."/>
            <person name="Sandrin M.S."/>
        </authorList>
    </citation>
    <scope>NUCLEOTIDE SEQUENCE [GENOMIC DNA]</scope>
    <source>
        <strain>BALB/cJ</strain>
        <tissue>Leukocyte</tissue>
    </source>
</reference>
<reference key="3">
    <citation type="journal article" date="2004" name="Genome Res.">
        <title>The status, quality, and expansion of the NIH full-length cDNA project: the Mammalian Gene Collection (MGC).</title>
        <authorList>
            <consortium name="The MGC Project Team"/>
        </authorList>
    </citation>
    <scope>NUCLEOTIDE SEQUENCE [LARGE SCALE MRNA]</scope>
    <source>
        <strain>FVB/N</strain>
        <tissue>Salivary gland</tissue>
    </source>
</reference>
<reference key="4">
    <citation type="journal article" date="2009" name="Genes Dev.">
        <title>Ly6d marks the earliest stage of B-cell specification and identifies the branchpoint between B-cell and T-cell development.</title>
        <authorList>
            <person name="Inlay M.A."/>
            <person name="Bhattacharya D."/>
            <person name="Sahoo D."/>
            <person name="Serwold T."/>
            <person name="Seita J."/>
            <person name="Karsunky H."/>
            <person name="Plevritis S.K."/>
            <person name="Dill D.L."/>
            <person name="Weissman I.L."/>
        </authorList>
    </citation>
    <scope>FUNCTION</scope>
    <scope>TISSUE SPECIFICITY</scope>
</reference>
<reference key="5">
    <citation type="journal article" date="2010" name="Cell">
        <title>A tissue-specific atlas of mouse protein phosphorylation and expression.</title>
        <authorList>
            <person name="Huttlin E.L."/>
            <person name="Jedrychowski M.P."/>
            <person name="Elias J.E."/>
            <person name="Goswami T."/>
            <person name="Rad R."/>
            <person name="Beausoleil S.A."/>
            <person name="Villen J."/>
            <person name="Haas W."/>
            <person name="Sowa M.E."/>
            <person name="Gygi S.P."/>
        </authorList>
    </citation>
    <scope>IDENTIFICATION BY MASS SPECTROMETRY [LARGE SCALE ANALYSIS]</scope>
    <source>
        <tissue>Spleen</tissue>
        <tissue>Testis</tissue>
    </source>
</reference>
<keyword id="KW-1003">Cell membrane</keyword>
<keyword id="KW-1015">Disulfide bond</keyword>
<keyword id="KW-0325">Glycoprotein</keyword>
<keyword id="KW-0336">GPI-anchor</keyword>
<keyword id="KW-0449">Lipoprotein</keyword>
<keyword id="KW-0472">Membrane</keyword>
<keyword id="KW-1185">Reference proteome</keyword>
<keyword id="KW-0732">Signal</keyword>
<comment type="function">
    <text evidence="3">May act as a specification marker at earliest stage specification of lymphocytes between B- and T-cell development. Marks the earliest stage of B-cell specification.</text>
</comment>
<comment type="subcellular location">
    <subcellularLocation>
        <location evidence="1">Cell membrane</location>
        <topology evidence="1">Lipid-anchor</topology>
        <topology evidence="1">GPI-anchor</topology>
    </subcellularLocation>
</comment>
<comment type="tissue specificity">
    <text evidence="3">Lymphoid cells lacking Ly6d, called ALP (all-lymphoid progenitor), retain full lymphoid potential and early thymic seeding activity, whereas cells containing Ly6d, called BLP (B-cell-biased lymphoid progenitor), up-regulate the B-cell specifying factors Ebf1 and Pax5 and behave essentially as B-cell progenitors (at protein level). Thymocytes and B-cells.</text>
</comment>
<comment type="sequence caution" evidence="4">
    <conflict type="erroneous initiation">
        <sequence resource="EMBL-CDS" id="AAA79249"/>
    </conflict>
</comment>